<comment type="function">
    <text evidence="1 2">Catalytic subunit of a heterodimer with TRMT112, which specifically methylates the 6th position of adenine in position 1832 of 18S rRNA (By similarity). N6-methylation of adenine(1832) in 18S rRNA resides in the decoding center of 18S rRNA and is required for translation and embryonic stem cells (ESCs) pluripotency and differentiation (By similarity).</text>
</comment>
<comment type="catalytic activity">
    <reaction evidence="2">
        <text>adenosine(1832) in 18S rRNA + S-adenosyl-L-methionine = N(6)-methyladenosine(1832) in 18S rRNA + S-adenosyl-L-homocysteine + H(+)</text>
        <dbReference type="Rhea" id="RHEA:62612"/>
        <dbReference type="Rhea" id="RHEA-COMP:16144"/>
        <dbReference type="Rhea" id="RHEA-COMP:16145"/>
        <dbReference type="ChEBI" id="CHEBI:15378"/>
        <dbReference type="ChEBI" id="CHEBI:57856"/>
        <dbReference type="ChEBI" id="CHEBI:59789"/>
        <dbReference type="ChEBI" id="CHEBI:74411"/>
        <dbReference type="ChEBI" id="CHEBI:74449"/>
    </reaction>
    <physiologicalReaction direction="left-to-right" evidence="2">
        <dbReference type="Rhea" id="RHEA:62613"/>
    </physiologicalReaction>
</comment>
<comment type="activity regulation">
    <text evidence="2">rRNA N6-adenosine-methyltransferase activity is inhibited by zinc.</text>
</comment>
<comment type="subcellular location">
    <subcellularLocation>
        <location evidence="2">Nucleus</location>
    </subcellularLocation>
    <subcellularLocation>
        <location evidence="2">Presynapse</location>
    </subcellularLocation>
    <subcellularLocation>
        <location evidence="2">Postsynapse</location>
    </subcellularLocation>
</comment>
<comment type="developmental stage">
    <text evidence="3">Expressed from 20 minutes after fertilization in embryos.</text>
</comment>
<comment type="disruption phenotype">
    <text evidence="3">Microcephaly and curved tails.</text>
</comment>
<comment type="similarity">
    <text evidence="5">Belongs to the methyltransferase superfamily. PrmA family.</text>
</comment>
<protein>
    <recommendedName>
        <fullName evidence="5">rRNA N(6)-adenosine-methyltransferase METTL5</fullName>
        <ecNumber evidence="2">2.1.1.-</ecNumber>
    </recommendedName>
    <alternativeName>
        <fullName evidence="4">Methyltransferase-like protein 5</fullName>
    </alternativeName>
</protein>
<accession>F1QVR8</accession>
<accession>Q5XJ53</accession>
<gene>
    <name evidence="4 7" type="primary">mettl5</name>
</gene>
<proteinExistence type="evidence at transcript level"/>
<organism>
    <name type="scientific">Danio rerio</name>
    <name type="common">Zebrafish</name>
    <name type="synonym">Brachydanio rerio</name>
    <dbReference type="NCBI Taxonomy" id="7955"/>
    <lineage>
        <taxon>Eukaryota</taxon>
        <taxon>Metazoa</taxon>
        <taxon>Chordata</taxon>
        <taxon>Craniata</taxon>
        <taxon>Vertebrata</taxon>
        <taxon>Euteleostomi</taxon>
        <taxon>Actinopterygii</taxon>
        <taxon>Neopterygii</taxon>
        <taxon>Teleostei</taxon>
        <taxon>Ostariophysi</taxon>
        <taxon>Cypriniformes</taxon>
        <taxon>Danionidae</taxon>
        <taxon>Danioninae</taxon>
        <taxon>Danio</taxon>
    </lineage>
</organism>
<dbReference type="EC" id="2.1.1.-" evidence="2"/>
<dbReference type="EMBL" id="BX321905">
    <property type="status" value="NOT_ANNOTATED_CDS"/>
    <property type="molecule type" value="Genomic_DNA"/>
</dbReference>
<dbReference type="EMBL" id="BC083455">
    <property type="protein sequence ID" value="AAH83455.1"/>
    <property type="molecule type" value="mRNA"/>
</dbReference>
<dbReference type="RefSeq" id="NP_001005949.1">
    <property type="nucleotide sequence ID" value="NM_001005949.1"/>
</dbReference>
<dbReference type="SMR" id="F1QVR8"/>
<dbReference type="FunCoup" id="F1QVR8">
    <property type="interactions" value="1024"/>
</dbReference>
<dbReference type="STRING" id="7955.ENSDARP00000090567"/>
<dbReference type="PaxDb" id="7955-ENSDARP00000090567"/>
<dbReference type="Ensembl" id="ENSDART00000099794">
    <property type="protein sequence ID" value="ENSDARP00000090567"/>
    <property type="gene ID" value="ENSDARG00000068893"/>
</dbReference>
<dbReference type="Ensembl" id="ENSDART00000169733">
    <property type="protein sequence ID" value="ENSDARP00000138303"/>
    <property type="gene ID" value="ENSDARG00000068893"/>
</dbReference>
<dbReference type="GeneID" id="449776"/>
<dbReference type="KEGG" id="dre:449776"/>
<dbReference type="AGR" id="ZFIN:ZDB-GENE-041010-21"/>
<dbReference type="CTD" id="29081"/>
<dbReference type="ZFIN" id="ZDB-GENE-041010-21">
    <property type="gene designation" value="mettl5"/>
</dbReference>
<dbReference type="eggNOG" id="KOG3420">
    <property type="taxonomic scope" value="Eukaryota"/>
</dbReference>
<dbReference type="HOGENOM" id="CLU_074702_1_1_1"/>
<dbReference type="InParanoid" id="F1QVR8"/>
<dbReference type="OMA" id="DVVYSIH"/>
<dbReference type="OrthoDB" id="419617at2759"/>
<dbReference type="TreeFam" id="TF314953"/>
<dbReference type="PRO" id="PR:F1QVR8"/>
<dbReference type="Proteomes" id="UP000000437">
    <property type="component" value="Chromosome 9"/>
</dbReference>
<dbReference type="Bgee" id="ENSDARG00000068893">
    <property type="expression patterns" value="Expressed in mature ovarian follicle and 27 other cell types or tissues"/>
</dbReference>
<dbReference type="ExpressionAtlas" id="F1QVR8">
    <property type="expression patterns" value="baseline and differential"/>
</dbReference>
<dbReference type="GO" id="GO:0042995">
    <property type="term" value="C:cell projection"/>
    <property type="evidence" value="ECO:0007669"/>
    <property type="project" value="UniProtKB-KW"/>
</dbReference>
<dbReference type="GO" id="GO:0005634">
    <property type="term" value="C:nucleus"/>
    <property type="evidence" value="ECO:0000250"/>
    <property type="project" value="UniProtKB"/>
</dbReference>
<dbReference type="GO" id="GO:0098794">
    <property type="term" value="C:postsynapse"/>
    <property type="evidence" value="ECO:0000250"/>
    <property type="project" value="UniProtKB"/>
</dbReference>
<dbReference type="GO" id="GO:0098793">
    <property type="term" value="C:presynapse"/>
    <property type="evidence" value="ECO:0000250"/>
    <property type="project" value="UniProtKB"/>
</dbReference>
<dbReference type="GO" id="GO:0003676">
    <property type="term" value="F:nucleic acid binding"/>
    <property type="evidence" value="ECO:0007669"/>
    <property type="project" value="InterPro"/>
</dbReference>
<dbReference type="GO" id="GO:0008988">
    <property type="term" value="F:rRNA (adenine-N6-)-methyltransferase activity"/>
    <property type="evidence" value="ECO:0000250"/>
    <property type="project" value="UniProtKB"/>
</dbReference>
<dbReference type="GO" id="GO:1904047">
    <property type="term" value="F:S-adenosyl-L-methionine binding"/>
    <property type="evidence" value="ECO:0000250"/>
    <property type="project" value="UniProtKB"/>
</dbReference>
<dbReference type="GO" id="GO:0045727">
    <property type="term" value="P:positive regulation of translation"/>
    <property type="evidence" value="ECO:0000250"/>
    <property type="project" value="UniProtKB"/>
</dbReference>
<dbReference type="GO" id="GO:0031167">
    <property type="term" value="P:rRNA methylation"/>
    <property type="evidence" value="ECO:0000250"/>
    <property type="project" value="UniProtKB"/>
</dbReference>
<dbReference type="GO" id="GO:0048863">
    <property type="term" value="P:stem cell differentiation"/>
    <property type="evidence" value="ECO:0000250"/>
    <property type="project" value="UniProtKB"/>
</dbReference>
<dbReference type="CDD" id="cd02440">
    <property type="entry name" value="AdoMet_MTases"/>
    <property type="match status" value="1"/>
</dbReference>
<dbReference type="Gene3D" id="3.40.50.150">
    <property type="entry name" value="Vaccinia Virus protein VP39"/>
    <property type="match status" value="1"/>
</dbReference>
<dbReference type="InterPro" id="IPR002052">
    <property type="entry name" value="DNA_methylase_N6_adenine_CS"/>
</dbReference>
<dbReference type="InterPro" id="IPR051720">
    <property type="entry name" value="rRNA_MeTrfase/Polyamine_Synth"/>
</dbReference>
<dbReference type="InterPro" id="IPR029063">
    <property type="entry name" value="SAM-dependent_MTases_sf"/>
</dbReference>
<dbReference type="InterPro" id="IPR007848">
    <property type="entry name" value="Small_mtfrase_dom"/>
</dbReference>
<dbReference type="PANTHER" id="PTHR23290">
    <property type="entry name" value="RRNA N6-ADENOSINE-METHYLTRANSFERASE METTL5"/>
    <property type="match status" value="1"/>
</dbReference>
<dbReference type="PANTHER" id="PTHR23290:SF0">
    <property type="entry name" value="RRNA N6-ADENOSINE-METHYLTRANSFERASE METTL5"/>
    <property type="match status" value="1"/>
</dbReference>
<dbReference type="Pfam" id="PF05175">
    <property type="entry name" value="MTS"/>
    <property type="match status" value="1"/>
</dbReference>
<dbReference type="SUPFAM" id="SSF53335">
    <property type="entry name" value="S-adenosyl-L-methionine-dependent methyltransferases"/>
    <property type="match status" value="1"/>
</dbReference>
<dbReference type="PROSITE" id="PS00092">
    <property type="entry name" value="N6_MTASE"/>
    <property type="match status" value="1"/>
</dbReference>
<feature type="chain" id="PRO_0000449609" description="rRNA N(6)-adenosine-methyltransferase METTL5">
    <location>
        <begin position="1"/>
        <end position="207"/>
    </location>
</feature>
<feature type="binding site" evidence="2">
    <location>
        <position position="25"/>
    </location>
    <ligand>
        <name>S-adenosyl-L-methionine</name>
        <dbReference type="ChEBI" id="CHEBI:59789"/>
    </ligand>
</feature>
<feature type="binding site" evidence="2">
    <location>
        <position position="28"/>
    </location>
    <ligand>
        <name>S-adenosyl-L-methionine</name>
        <dbReference type="ChEBI" id="CHEBI:59789"/>
    </ligand>
</feature>
<feature type="binding site" evidence="2">
    <location>
        <position position="56"/>
    </location>
    <ligand>
        <name>S-adenosyl-L-methionine</name>
        <dbReference type="ChEBI" id="CHEBI:59789"/>
    </ligand>
</feature>
<feature type="binding site" evidence="2">
    <location>
        <position position="59"/>
    </location>
    <ligand>
        <name>S-adenosyl-L-methionine</name>
        <dbReference type="ChEBI" id="CHEBI:59789"/>
    </ligand>
</feature>
<feature type="binding site" evidence="2">
    <location>
        <position position="61"/>
    </location>
    <ligand>
        <name>S-adenosyl-L-methionine</name>
        <dbReference type="ChEBI" id="CHEBI:59789"/>
    </ligand>
</feature>
<feature type="binding site" evidence="2">
    <location>
        <position position="78"/>
    </location>
    <ligand>
        <name>S-adenosyl-L-methionine</name>
        <dbReference type="ChEBI" id="CHEBI:59789"/>
    </ligand>
</feature>
<feature type="binding site" evidence="2">
    <location>
        <begin position="105"/>
        <end position="106"/>
    </location>
    <ligand>
        <name>S-adenosyl-L-methionine</name>
        <dbReference type="ChEBI" id="CHEBI:59789"/>
    </ligand>
</feature>
<feature type="sequence conflict" description="In Ref. 2; AAH83455." evidence="5" ref="2">
    <original>S</original>
    <variation>T</variation>
    <location>
        <position position="148"/>
    </location>
</feature>
<keyword id="KW-0966">Cell projection</keyword>
<keyword id="KW-0489">Methyltransferase</keyword>
<keyword id="KW-0539">Nucleus</keyword>
<keyword id="KW-1185">Reference proteome</keyword>
<keyword id="KW-0949">S-adenosyl-L-methionine</keyword>
<keyword id="KW-0770">Synapse</keyword>
<keyword id="KW-0808">Transferase</keyword>
<name>METL5_DANRE</name>
<evidence type="ECO:0000250" key="1">
    <source>
        <dbReference type="UniProtKB" id="Q8K1A0"/>
    </source>
</evidence>
<evidence type="ECO:0000250" key="2">
    <source>
        <dbReference type="UniProtKB" id="Q9NRN9"/>
    </source>
</evidence>
<evidence type="ECO:0000269" key="3">
    <source>
    </source>
</evidence>
<evidence type="ECO:0000303" key="4">
    <source>
    </source>
</evidence>
<evidence type="ECO:0000305" key="5"/>
<evidence type="ECO:0000312" key="6">
    <source>
        <dbReference type="EMBL" id="AAH83455.1"/>
    </source>
</evidence>
<evidence type="ECO:0000312" key="7">
    <source>
        <dbReference type="ZFIN" id="ZDB-GENE-041010-21"/>
    </source>
</evidence>
<sequence>MKLKELESCLQQVDGFEEPKILLEQYPTSPHIAGCMLYTIHNTFDDIQNKLVADLGCGCGVLSIGAAVLDAGLCVGFDIDEDALDIFRGNVEEFELPNIDVVQCDVCSIGSSYAKKFDTVIMNPPFGTKHNQGIDMQFLQTAISMATSAVYSLHKTSTRDHIQKKANDWKVKMEVIAELRYDLPASYKFHKKKSVDIQVDFIRFTPT</sequence>
<reference key="1">
    <citation type="journal article" date="2013" name="Nature">
        <title>The zebrafish reference genome sequence and its relationship to the human genome.</title>
        <authorList>
            <person name="Howe K."/>
            <person name="Clark M.D."/>
            <person name="Torroja C.F."/>
            <person name="Torrance J."/>
            <person name="Berthelot C."/>
            <person name="Muffato M."/>
            <person name="Collins J.E."/>
            <person name="Humphray S."/>
            <person name="McLaren K."/>
            <person name="Matthews L."/>
            <person name="McLaren S."/>
            <person name="Sealy I."/>
            <person name="Caccamo M."/>
            <person name="Churcher C."/>
            <person name="Scott C."/>
            <person name="Barrett J.C."/>
            <person name="Koch R."/>
            <person name="Rauch G.J."/>
            <person name="White S."/>
            <person name="Chow W."/>
            <person name="Kilian B."/>
            <person name="Quintais L.T."/>
            <person name="Guerra-Assuncao J.A."/>
            <person name="Zhou Y."/>
            <person name="Gu Y."/>
            <person name="Yen J."/>
            <person name="Vogel J.H."/>
            <person name="Eyre T."/>
            <person name="Redmond S."/>
            <person name="Banerjee R."/>
            <person name="Chi J."/>
            <person name="Fu B."/>
            <person name="Langley E."/>
            <person name="Maguire S.F."/>
            <person name="Laird G.K."/>
            <person name="Lloyd D."/>
            <person name="Kenyon E."/>
            <person name="Donaldson S."/>
            <person name="Sehra H."/>
            <person name="Almeida-King J."/>
            <person name="Loveland J."/>
            <person name="Trevanion S."/>
            <person name="Jones M."/>
            <person name="Quail M."/>
            <person name="Willey D."/>
            <person name="Hunt A."/>
            <person name="Burton J."/>
            <person name="Sims S."/>
            <person name="McLay K."/>
            <person name="Plumb B."/>
            <person name="Davis J."/>
            <person name="Clee C."/>
            <person name="Oliver K."/>
            <person name="Clark R."/>
            <person name="Riddle C."/>
            <person name="Elliot D."/>
            <person name="Threadgold G."/>
            <person name="Harden G."/>
            <person name="Ware D."/>
            <person name="Begum S."/>
            <person name="Mortimore B."/>
            <person name="Kerry G."/>
            <person name="Heath P."/>
            <person name="Phillimore B."/>
            <person name="Tracey A."/>
            <person name="Corby N."/>
            <person name="Dunn M."/>
            <person name="Johnson C."/>
            <person name="Wood J."/>
            <person name="Clark S."/>
            <person name="Pelan S."/>
            <person name="Griffiths G."/>
            <person name="Smith M."/>
            <person name="Glithero R."/>
            <person name="Howden P."/>
            <person name="Barker N."/>
            <person name="Lloyd C."/>
            <person name="Stevens C."/>
            <person name="Harley J."/>
            <person name="Holt K."/>
            <person name="Panagiotidis G."/>
            <person name="Lovell J."/>
            <person name="Beasley H."/>
            <person name="Henderson C."/>
            <person name="Gordon D."/>
            <person name="Auger K."/>
            <person name="Wright D."/>
            <person name="Collins J."/>
            <person name="Raisen C."/>
            <person name="Dyer L."/>
            <person name="Leung K."/>
            <person name="Robertson L."/>
            <person name="Ambridge K."/>
            <person name="Leongamornlert D."/>
            <person name="McGuire S."/>
            <person name="Gilderthorp R."/>
            <person name="Griffiths C."/>
            <person name="Manthravadi D."/>
            <person name="Nichol S."/>
            <person name="Barker G."/>
            <person name="Whitehead S."/>
            <person name="Kay M."/>
            <person name="Brown J."/>
            <person name="Murnane C."/>
            <person name="Gray E."/>
            <person name="Humphries M."/>
            <person name="Sycamore N."/>
            <person name="Barker D."/>
            <person name="Saunders D."/>
            <person name="Wallis J."/>
            <person name="Babbage A."/>
            <person name="Hammond S."/>
            <person name="Mashreghi-Mohammadi M."/>
            <person name="Barr L."/>
            <person name="Martin S."/>
            <person name="Wray P."/>
            <person name="Ellington A."/>
            <person name="Matthews N."/>
            <person name="Ellwood M."/>
            <person name="Woodmansey R."/>
            <person name="Clark G."/>
            <person name="Cooper J."/>
            <person name="Tromans A."/>
            <person name="Grafham D."/>
            <person name="Skuce C."/>
            <person name="Pandian R."/>
            <person name="Andrews R."/>
            <person name="Harrison E."/>
            <person name="Kimberley A."/>
            <person name="Garnett J."/>
            <person name="Fosker N."/>
            <person name="Hall R."/>
            <person name="Garner P."/>
            <person name="Kelly D."/>
            <person name="Bird C."/>
            <person name="Palmer S."/>
            <person name="Gehring I."/>
            <person name="Berger A."/>
            <person name="Dooley C.M."/>
            <person name="Ersan-Urun Z."/>
            <person name="Eser C."/>
            <person name="Geiger H."/>
            <person name="Geisler M."/>
            <person name="Karotki L."/>
            <person name="Kirn A."/>
            <person name="Konantz J."/>
            <person name="Konantz M."/>
            <person name="Oberlander M."/>
            <person name="Rudolph-Geiger S."/>
            <person name="Teucke M."/>
            <person name="Lanz C."/>
            <person name="Raddatz G."/>
            <person name="Osoegawa K."/>
            <person name="Zhu B."/>
            <person name="Rapp A."/>
            <person name="Widaa S."/>
            <person name="Langford C."/>
            <person name="Yang F."/>
            <person name="Schuster S.C."/>
            <person name="Carter N.P."/>
            <person name="Harrow J."/>
            <person name="Ning Z."/>
            <person name="Herrero J."/>
            <person name="Searle S.M."/>
            <person name="Enright A."/>
            <person name="Geisler R."/>
            <person name="Plasterk R.H."/>
            <person name="Lee C."/>
            <person name="Westerfield M."/>
            <person name="de Jong P.J."/>
            <person name="Zon L.I."/>
            <person name="Postlethwait J.H."/>
            <person name="Nusslein-Volhard C."/>
            <person name="Hubbard T.J."/>
            <person name="Roest Crollius H."/>
            <person name="Rogers J."/>
            <person name="Stemple D.L."/>
        </authorList>
    </citation>
    <scope>NUCLEOTIDE SEQUENCE [LARGE SCALE GENOMIC DNA]</scope>
    <source>
        <strain>Tuebingen</strain>
    </source>
</reference>
<reference key="2">
    <citation type="submission" date="2004-10" db="EMBL/GenBank/DDBJ databases">
        <authorList>
            <consortium name="NIH - Zebrafish Gene Collection (ZGC) project"/>
        </authorList>
    </citation>
    <scope>NUCLEOTIDE SEQUENCE [LARGE SCALE MRNA]</scope>
    <source>
        <tissue evidence="6">Larva</tissue>
    </source>
</reference>
<reference key="3">
    <citation type="journal article" date="2019" name="Am. J. Hum. Genet.">
        <title>Bi-allelic variants in METTL5 cause autosomal-recessive intellectual disability and microcephaly.</title>
        <authorList>
            <person name="Richard E.M."/>
            <person name="Polla D.L."/>
            <person name="Assir M.Z."/>
            <person name="Contreras M."/>
            <person name="Shahzad M."/>
            <person name="Khan A.A."/>
            <person name="Razzaq A."/>
            <person name="Akram J."/>
            <person name="Tarar M.N."/>
            <person name="Blanpied T.A."/>
            <person name="Ahmed Z.M."/>
            <person name="Abou Jamra R."/>
            <person name="Wieczorek D."/>
            <person name="van Bokhoven H."/>
            <person name="Riazuddin S."/>
            <person name="Riazuddin S."/>
        </authorList>
    </citation>
    <scope>DEVELOPMENTAL STAGE</scope>
    <scope>DISRUPTION PHENOTYPE</scope>
</reference>